<gene>
    <name evidence="1" type="primary">glgA</name>
    <name type="ordered locus">gbs0874</name>
</gene>
<proteinExistence type="inferred from homology"/>
<organism>
    <name type="scientific">Streptococcus agalactiae serotype III (strain NEM316)</name>
    <dbReference type="NCBI Taxonomy" id="211110"/>
    <lineage>
        <taxon>Bacteria</taxon>
        <taxon>Bacillati</taxon>
        <taxon>Bacillota</taxon>
        <taxon>Bacilli</taxon>
        <taxon>Lactobacillales</taxon>
        <taxon>Streptococcaceae</taxon>
        <taxon>Streptococcus</taxon>
    </lineage>
</organism>
<dbReference type="EC" id="2.4.1.21" evidence="1"/>
<dbReference type="EMBL" id="AL766847">
    <property type="protein sequence ID" value="CAD46518.1"/>
    <property type="molecule type" value="Genomic_DNA"/>
</dbReference>
<dbReference type="RefSeq" id="WP_000699871.1">
    <property type="nucleotide sequence ID" value="NC_004368.1"/>
</dbReference>
<dbReference type="SMR" id="Q8E5V5"/>
<dbReference type="CAZy" id="GT5">
    <property type="family name" value="Glycosyltransferase Family 5"/>
</dbReference>
<dbReference type="KEGG" id="san:gbs0874"/>
<dbReference type="eggNOG" id="COG0297">
    <property type="taxonomic scope" value="Bacteria"/>
</dbReference>
<dbReference type="HOGENOM" id="CLU_009583_18_2_9"/>
<dbReference type="UniPathway" id="UPA00164"/>
<dbReference type="Proteomes" id="UP000000823">
    <property type="component" value="Chromosome"/>
</dbReference>
<dbReference type="GO" id="GO:0009011">
    <property type="term" value="F:alpha-1,4-glucan glucosyltransferase (ADP-glucose donor) activity"/>
    <property type="evidence" value="ECO:0007669"/>
    <property type="project" value="UniProtKB-UniRule"/>
</dbReference>
<dbReference type="GO" id="GO:0004373">
    <property type="term" value="F:alpha-1,4-glucan glucosyltransferase (UDP-glucose donor) activity"/>
    <property type="evidence" value="ECO:0007669"/>
    <property type="project" value="InterPro"/>
</dbReference>
<dbReference type="GO" id="GO:0005978">
    <property type="term" value="P:glycogen biosynthetic process"/>
    <property type="evidence" value="ECO:0007669"/>
    <property type="project" value="UniProtKB-UniRule"/>
</dbReference>
<dbReference type="CDD" id="cd03791">
    <property type="entry name" value="GT5_Glycogen_synthase_DULL1-like"/>
    <property type="match status" value="1"/>
</dbReference>
<dbReference type="Gene3D" id="3.40.50.2000">
    <property type="entry name" value="Glycogen Phosphorylase B"/>
    <property type="match status" value="2"/>
</dbReference>
<dbReference type="HAMAP" id="MF_00484">
    <property type="entry name" value="Glycogen_synth"/>
    <property type="match status" value="1"/>
</dbReference>
<dbReference type="InterPro" id="IPR001296">
    <property type="entry name" value="Glyco_trans_1"/>
</dbReference>
<dbReference type="InterPro" id="IPR011835">
    <property type="entry name" value="GS/SS"/>
</dbReference>
<dbReference type="InterPro" id="IPR013534">
    <property type="entry name" value="Starch_synth_cat_dom"/>
</dbReference>
<dbReference type="NCBIfam" id="TIGR02095">
    <property type="entry name" value="glgA"/>
    <property type="match status" value="1"/>
</dbReference>
<dbReference type="NCBIfam" id="NF001898">
    <property type="entry name" value="PRK00654.1-1"/>
    <property type="match status" value="1"/>
</dbReference>
<dbReference type="PANTHER" id="PTHR45825:SF11">
    <property type="entry name" value="ALPHA AMYLASE DOMAIN-CONTAINING PROTEIN"/>
    <property type="match status" value="1"/>
</dbReference>
<dbReference type="PANTHER" id="PTHR45825">
    <property type="entry name" value="GRANULE-BOUND STARCH SYNTHASE 1, CHLOROPLASTIC/AMYLOPLASTIC"/>
    <property type="match status" value="1"/>
</dbReference>
<dbReference type="Pfam" id="PF08323">
    <property type="entry name" value="Glyco_transf_5"/>
    <property type="match status" value="1"/>
</dbReference>
<dbReference type="Pfam" id="PF00534">
    <property type="entry name" value="Glycos_transf_1"/>
    <property type="match status" value="1"/>
</dbReference>
<dbReference type="SUPFAM" id="SSF53756">
    <property type="entry name" value="UDP-Glycosyltransferase/glycogen phosphorylase"/>
    <property type="match status" value="1"/>
</dbReference>
<reference key="1">
    <citation type="journal article" date="2002" name="Mol. Microbiol.">
        <title>Genome sequence of Streptococcus agalactiae, a pathogen causing invasive neonatal disease.</title>
        <authorList>
            <person name="Glaser P."/>
            <person name="Rusniok C."/>
            <person name="Buchrieser C."/>
            <person name="Chevalier F."/>
            <person name="Frangeul L."/>
            <person name="Msadek T."/>
            <person name="Zouine M."/>
            <person name="Couve E."/>
            <person name="Lalioui L."/>
            <person name="Poyart C."/>
            <person name="Trieu-Cuot P."/>
            <person name="Kunst F."/>
        </authorList>
    </citation>
    <scope>NUCLEOTIDE SEQUENCE [LARGE SCALE GENOMIC DNA]</scope>
    <source>
        <strain>NEM316</strain>
    </source>
</reference>
<comment type="function">
    <text evidence="1">Synthesizes alpha-1,4-glucan chains using ADP-glucose.</text>
</comment>
<comment type="catalytic activity">
    <reaction evidence="1">
        <text>[(1-&gt;4)-alpha-D-glucosyl](n) + ADP-alpha-D-glucose = [(1-&gt;4)-alpha-D-glucosyl](n+1) + ADP + H(+)</text>
        <dbReference type="Rhea" id="RHEA:18189"/>
        <dbReference type="Rhea" id="RHEA-COMP:9584"/>
        <dbReference type="Rhea" id="RHEA-COMP:9587"/>
        <dbReference type="ChEBI" id="CHEBI:15378"/>
        <dbReference type="ChEBI" id="CHEBI:15444"/>
        <dbReference type="ChEBI" id="CHEBI:57498"/>
        <dbReference type="ChEBI" id="CHEBI:456216"/>
        <dbReference type="EC" id="2.4.1.21"/>
    </reaction>
</comment>
<comment type="pathway">
    <text evidence="1">Glycan biosynthesis; glycogen biosynthesis.</text>
</comment>
<comment type="similarity">
    <text evidence="1">Belongs to the glycosyltransferase 1 family. Bacterial/plant glycogen synthase subfamily.</text>
</comment>
<evidence type="ECO:0000255" key="1">
    <source>
        <dbReference type="HAMAP-Rule" id="MF_00484"/>
    </source>
</evidence>
<feature type="chain" id="PRO_0000188646" description="Glycogen synthase">
    <location>
        <begin position="1"/>
        <end position="476"/>
    </location>
</feature>
<feature type="binding site" evidence="1">
    <location>
        <position position="15"/>
    </location>
    <ligand>
        <name>ADP-alpha-D-glucose</name>
        <dbReference type="ChEBI" id="CHEBI:57498"/>
    </ligand>
</feature>
<keyword id="KW-0320">Glycogen biosynthesis</keyword>
<keyword id="KW-0328">Glycosyltransferase</keyword>
<keyword id="KW-0808">Transferase</keyword>
<name>GLGA_STRA3</name>
<sequence>MKIMFVAAEGAPFAKTGGLGDVIGALPKSLSKKGHDVVVVMPYYDMVDQKFGDQIENLMYFYTDVGWRHQYVGVKRLSQDNVTFYFIDNQYYFYRGHVYGDWDDGERFAYFQLAALELMEKINFIPDVLHVHDYHTAMIPFLLKEKYHWIQAYNNIRTVFTIHNIEFQGQFGPEMLGDLFGVGAERYEDGTLRWNNCLNWMKAAILYSDRVTTVSPSYANEIKTPEFGKGLDQIMRMEAGKLSGIVNGIDSDLLNPETDAFLPYHFSKSNLEGKIKNKLALQENLGLPQDKNVPLIGIVSRLTDQKGFDIIASELDNMLQQDIQMVILGTGYHHFEETFSYFASRYPEKLSANITFDLRLAQQIYAASDIFMMPSAFEPCGLSQMMAMRYGSLPLVHEVGGLKDTVVAFNQFDGSGTGFSFNHFSGYWLMQTLKLALEVYNDYPEAWKKLQWQAMSKDFSWDTACVAYEQLYQQLQ</sequence>
<protein>
    <recommendedName>
        <fullName evidence="1">Glycogen synthase</fullName>
        <ecNumber evidence="1">2.4.1.21</ecNumber>
    </recommendedName>
    <alternativeName>
        <fullName evidence="1">Starch [bacterial glycogen] synthase</fullName>
    </alternativeName>
</protein>
<accession>Q8E5V5</accession>